<organism>
    <name type="scientific">Bos taurus</name>
    <name type="common">Bovine</name>
    <dbReference type="NCBI Taxonomy" id="9913"/>
    <lineage>
        <taxon>Eukaryota</taxon>
        <taxon>Metazoa</taxon>
        <taxon>Chordata</taxon>
        <taxon>Craniata</taxon>
        <taxon>Vertebrata</taxon>
        <taxon>Euteleostomi</taxon>
        <taxon>Mammalia</taxon>
        <taxon>Eutheria</taxon>
        <taxon>Laurasiatheria</taxon>
        <taxon>Artiodactyla</taxon>
        <taxon>Ruminantia</taxon>
        <taxon>Pecora</taxon>
        <taxon>Bovidae</taxon>
        <taxon>Bovinae</taxon>
        <taxon>Bos</taxon>
    </lineage>
</organism>
<accession>Q2T9Y6</accession>
<name>GSH0_BOVIN</name>
<gene>
    <name type="primary">GCLM</name>
</gene>
<sequence>MGTDSRAAGALLARASTLHLQTGNLLNWGRLRKKCPSTHSEELRDCIQKTLNEWSSQISPDLIREFPDVLECTVSHAVEKINPDEREEMKVSAKLFIVGSNSSSSTRNAVDMACSVLGVAQLDSVIIASPPVEDGVNLSLEHLQPYWEELQNLVQSKKIVAIGTSDLDKTQLEQLYQWAQVKPNSNQVNLASCCVMPPDLTAFAKQFDIQLLTHNDPKELLSEASFQEALQESIPDIRAHEWVPLWLLRYSVIVKSRGIIKSKGYILQAKRKGS</sequence>
<dbReference type="EMBL" id="BC111206">
    <property type="protein sequence ID" value="AAI11207.1"/>
    <property type="molecule type" value="mRNA"/>
</dbReference>
<dbReference type="RefSeq" id="NP_001033232.1">
    <property type="nucleotide sequence ID" value="NM_001038143.1"/>
</dbReference>
<dbReference type="SMR" id="Q2T9Y6"/>
<dbReference type="FunCoup" id="Q2T9Y6">
    <property type="interactions" value="2167"/>
</dbReference>
<dbReference type="STRING" id="9913.ENSBTAP00000026855"/>
<dbReference type="SwissPalm" id="Q2T9Y6"/>
<dbReference type="PaxDb" id="9913-ENSBTAP00000026855"/>
<dbReference type="Ensembl" id="ENSBTAT00000026855.4">
    <property type="protein sequence ID" value="ENSBTAP00000026855.3"/>
    <property type="gene ID" value="ENSBTAG00000007842.7"/>
</dbReference>
<dbReference type="GeneID" id="525659"/>
<dbReference type="KEGG" id="bta:525659"/>
<dbReference type="CTD" id="2730"/>
<dbReference type="VEuPathDB" id="HostDB:ENSBTAG00000007842"/>
<dbReference type="VGNC" id="VGNC:29290">
    <property type="gene designation" value="GCLM"/>
</dbReference>
<dbReference type="eggNOG" id="KOG3023">
    <property type="taxonomic scope" value="Eukaryota"/>
</dbReference>
<dbReference type="GeneTree" id="ENSGT00510000047658"/>
<dbReference type="HOGENOM" id="CLU_055657_1_0_1"/>
<dbReference type="InParanoid" id="Q2T9Y6"/>
<dbReference type="OMA" id="AHEWIPL"/>
<dbReference type="OrthoDB" id="5596051at2759"/>
<dbReference type="TreeFam" id="TF105986"/>
<dbReference type="Reactome" id="R-BTA-174403">
    <property type="pathway name" value="Glutathione synthesis and recycling"/>
</dbReference>
<dbReference type="UniPathway" id="UPA00142">
    <property type="reaction ID" value="UER00209"/>
</dbReference>
<dbReference type="Proteomes" id="UP000009136">
    <property type="component" value="Chromosome 3"/>
</dbReference>
<dbReference type="Bgee" id="ENSBTAG00000007842">
    <property type="expression patterns" value="Expressed in liver and 104 other cell types or tissues"/>
</dbReference>
<dbReference type="GO" id="GO:0017109">
    <property type="term" value="C:glutamate-cysteine ligase complex"/>
    <property type="evidence" value="ECO:0000250"/>
    <property type="project" value="UniProtKB"/>
</dbReference>
<dbReference type="GO" id="GO:0004357">
    <property type="term" value="F:glutamate-cysteine ligase activity"/>
    <property type="evidence" value="ECO:0007669"/>
    <property type="project" value="Ensembl"/>
</dbReference>
<dbReference type="GO" id="GO:0035226">
    <property type="term" value="F:glutamate-cysteine ligase catalytic subunit binding"/>
    <property type="evidence" value="ECO:0000250"/>
    <property type="project" value="UniProtKB"/>
</dbReference>
<dbReference type="GO" id="GO:1990609">
    <property type="term" value="F:glutamate-cysteine ligase regulator activity"/>
    <property type="evidence" value="ECO:0000318"/>
    <property type="project" value="GO_Central"/>
</dbReference>
<dbReference type="GO" id="GO:0008637">
    <property type="term" value="P:apoptotic mitochondrial changes"/>
    <property type="evidence" value="ECO:0007669"/>
    <property type="project" value="Ensembl"/>
</dbReference>
<dbReference type="GO" id="GO:0097746">
    <property type="term" value="P:blood vessel diameter maintenance"/>
    <property type="evidence" value="ECO:0000250"/>
    <property type="project" value="UniProtKB"/>
</dbReference>
<dbReference type="GO" id="GO:1990830">
    <property type="term" value="P:cellular response to leukemia inhibitory factor"/>
    <property type="evidence" value="ECO:0007669"/>
    <property type="project" value="Ensembl"/>
</dbReference>
<dbReference type="GO" id="GO:0006534">
    <property type="term" value="P:cysteine metabolic process"/>
    <property type="evidence" value="ECO:0007669"/>
    <property type="project" value="Ensembl"/>
</dbReference>
<dbReference type="GO" id="GO:0006536">
    <property type="term" value="P:glutamate metabolic process"/>
    <property type="evidence" value="ECO:0000250"/>
    <property type="project" value="UniProtKB"/>
</dbReference>
<dbReference type="GO" id="GO:0006750">
    <property type="term" value="P:glutathione biosynthetic process"/>
    <property type="evidence" value="ECO:0000250"/>
    <property type="project" value="UniProtKB"/>
</dbReference>
<dbReference type="GO" id="GO:2001237">
    <property type="term" value="P:negative regulation of extrinsic apoptotic signaling pathway"/>
    <property type="evidence" value="ECO:0007669"/>
    <property type="project" value="Ensembl"/>
</dbReference>
<dbReference type="GO" id="GO:0051900">
    <property type="term" value="P:regulation of mitochondrial depolarization"/>
    <property type="evidence" value="ECO:0007669"/>
    <property type="project" value="Ensembl"/>
</dbReference>
<dbReference type="GO" id="GO:0006979">
    <property type="term" value="P:response to oxidative stress"/>
    <property type="evidence" value="ECO:0000250"/>
    <property type="project" value="UniProtKB"/>
</dbReference>
<dbReference type="GO" id="GO:0009410">
    <property type="term" value="P:response to xenobiotic stimulus"/>
    <property type="evidence" value="ECO:0000250"/>
    <property type="project" value="UniProtKB"/>
</dbReference>
<dbReference type="FunFam" id="3.20.20.100:FF:000012">
    <property type="entry name" value="Glutamate--cysteine ligase regulatory subunit"/>
    <property type="match status" value="1"/>
</dbReference>
<dbReference type="Gene3D" id="3.20.20.100">
    <property type="entry name" value="NADP-dependent oxidoreductase domain"/>
    <property type="match status" value="1"/>
</dbReference>
<dbReference type="InterPro" id="IPR032963">
    <property type="entry name" value="Gclm"/>
</dbReference>
<dbReference type="InterPro" id="IPR023210">
    <property type="entry name" value="NADP_OxRdtase_dom"/>
</dbReference>
<dbReference type="InterPro" id="IPR036812">
    <property type="entry name" value="NADP_OxRdtase_dom_sf"/>
</dbReference>
<dbReference type="PANTHER" id="PTHR13295">
    <property type="entry name" value="GLUTAMATE CYSTEINE LIGASE REGULATORY SUBUNIT"/>
    <property type="match status" value="1"/>
</dbReference>
<dbReference type="PANTHER" id="PTHR13295:SF4">
    <property type="entry name" value="GLUTAMATE--CYSTEINE LIGASE REGULATORY SUBUNIT"/>
    <property type="match status" value="1"/>
</dbReference>
<dbReference type="Pfam" id="PF00248">
    <property type="entry name" value="Aldo_ket_red"/>
    <property type="match status" value="1"/>
</dbReference>
<dbReference type="SUPFAM" id="SSF51430">
    <property type="entry name" value="NAD(P)-linked oxidoreductase"/>
    <property type="match status" value="1"/>
</dbReference>
<proteinExistence type="evidence at transcript level"/>
<comment type="pathway">
    <text>Sulfur metabolism; glutathione biosynthesis; glutathione from L-cysteine and L-glutamate: step 1/2.</text>
</comment>
<comment type="subunit">
    <text evidence="1">Heterodimer of a catalytic heavy chain and a regulatory light chain.</text>
</comment>
<comment type="similarity">
    <text evidence="4">Belongs to the aldo/keto reductase family. Glutamate--cysteine ligase light chain subfamily.</text>
</comment>
<reference key="1">
    <citation type="submission" date="2005-12" db="EMBL/GenBank/DDBJ databases">
        <authorList>
            <consortium name="NIH - Mammalian Gene Collection (MGC) project"/>
        </authorList>
    </citation>
    <scope>NUCLEOTIDE SEQUENCE [LARGE SCALE MRNA]</scope>
    <source>
        <strain>Crossbred X Angus</strain>
        <tissue>Liver</tissue>
    </source>
</reference>
<protein>
    <recommendedName>
        <fullName>Glutamate--cysteine ligase regulatory subunit</fullName>
    </recommendedName>
    <alternativeName>
        <fullName>GCS light chain</fullName>
    </alternativeName>
    <alternativeName>
        <fullName>Gamma-ECS regulatory subunit</fullName>
    </alternativeName>
    <alternativeName>
        <fullName>Gamma-glutamylcysteine synthetase regulatory subunit</fullName>
    </alternativeName>
    <alternativeName>
        <fullName>Glutamate--cysteine ligase modifier subunit</fullName>
    </alternativeName>
</protein>
<evidence type="ECO:0000250" key="1"/>
<evidence type="ECO:0000250" key="2">
    <source>
        <dbReference type="UniProtKB" id="O09172"/>
    </source>
</evidence>
<evidence type="ECO:0000250" key="3">
    <source>
        <dbReference type="UniProtKB" id="P48507"/>
    </source>
</evidence>
<evidence type="ECO:0000305" key="4"/>
<keyword id="KW-0007">Acetylation</keyword>
<keyword id="KW-0317">Glutathione biosynthesis</keyword>
<keyword id="KW-0597">Phosphoprotein</keyword>
<keyword id="KW-1185">Reference proteome</keyword>
<feature type="chain" id="PRO_0000253731" description="Glutamate--cysteine ligase regulatory subunit">
    <location>
        <begin position="1"/>
        <end position="274"/>
    </location>
</feature>
<feature type="modified residue" description="Phosphoserine" evidence="2">
    <location>
        <position position="59"/>
    </location>
</feature>
<feature type="modified residue" description="N6-acetyllysine" evidence="3">
    <location>
        <position position="263"/>
    </location>
</feature>